<name>ISPE_RHIWR</name>
<comment type="function">
    <text evidence="1">Catalyzes the phosphorylation of the position 2 hydroxy group of 4-diphosphocytidyl-2C-methyl-D-erythritol.</text>
</comment>
<comment type="catalytic activity">
    <reaction evidence="1">
        <text>4-CDP-2-C-methyl-D-erythritol + ATP = 4-CDP-2-C-methyl-D-erythritol 2-phosphate + ADP + H(+)</text>
        <dbReference type="Rhea" id="RHEA:18437"/>
        <dbReference type="ChEBI" id="CHEBI:15378"/>
        <dbReference type="ChEBI" id="CHEBI:30616"/>
        <dbReference type="ChEBI" id="CHEBI:57823"/>
        <dbReference type="ChEBI" id="CHEBI:57919"/>
        <dbReference type="ChEBI" id="CHEBI:456216"/>
        <dbReference type="EC" id="2.7.1.148"/>
    </reaction>
</comment>
<comment type="pathway">
    <text evidence="1">Isoprenoid biosynthesis; isopentenyl diphosphate biosynthesis via DXP pathway; isopentenyl diphosphate from 1-deoxy-D-xylulose 5-phosphate: step 3/6.</text>
</comment>
<comment type="similarity">
    <text evidence="1">Belongs to the GHMP kinase family. IspE subfamily.</text>
</comment>
<dbReference type="EC" id="2.7.1.148" evidence="1"/>
<dbReference type="EMBL" id="CP000699">
    <property type="protein sequence ID" value="ABQ70449.1"/>
    <property type="molecule type" value="Genomic_DNA"/>
</dbReference>
<dbReference type="SMR" id="A5VDT3"/>
<dbReference type="STRING" id="392499.Swit_4106"/>
<dbReference type="PaxDb" id="392499-Swit_4106"/>
<dbReference type="KEGG" id="swi:Swit_4106"/>
<dbReference type="eggNOG" id="COG1947">
    <property type="taxonomic scope" value="Bacteria"/>
</dbReference>
<dbReference type="HOGENOM" id="CLU_053057_1_0_5"/>
<dbReference type="OrthoDB" id="9809438at2"/>
<dbReference type="UniPathway" id="UPA00056">
    <property type="reaction ID" value="UER00094"/>
</dbReference>
<dbReference type="Proteomes" id="UP000001989">
    <property type="component" value="Chromosome"/>
</dbReference>
<dbReference type="GO" id="GO:0050515">
    <property type="term" value="F:4-(cytidine 5'-diphospho)-2-C-methyl-D-erythritol kinase activity"/>
    <property type="evidence" value="ECO:0007669"/>
    <property type="project" value="UniProtKB-UniRule"/>
</dbReference>
<dbReference type="GO" id="GO:0005524">
    <property type="term" value="F:ATP binding"/>
    <property type="evidence" value="ECO:0007669"/>
    <property type="project" value="UniProtKB-UniRule"/>
</dbReference>
<dbReference type="GO" id="GO:0019288">
    <property type="term" value="P:isopentenyl diphosphate biosynthetic process, methylerythritol 4-phosphate pathway"/>
    <property type="evidence" value="ECO:0007669"/>
    <property type="project" value="UniProtKB-UniRule"/>
</dbReference>
<dbReference type="GO" id="GO:0016114">
    <property type="term" value="P:terpenoid biosynthetic process"/>
    <property type="evidence" value="ECO:0007669"/>
    <property type="project" value="InterPro"/>
</dbReference>
<dbReference type="Gene3D" id="3.30.230.10">
    <property type="match status" value="1"/>
</dbReference>
<dbReference type="Gene3D" id="3.30.70.890">
    <property type="entry name" value="GHMP kinase, C-terminal domain"/>
    <property type="match status" value="1"/>
</dbReference>
<dbReference type="HAMAP" id="MF_00061">
    <property type="entry name" value="IspE"/>
    <property type="match status" value="1"/>
</dbReference>
<dbReference type="InterPro" id="IPR013750">
    <property type="entry name" value="GHMP_kinase_C_dom"/>
</dbReference>
<dbReference type="InterPro" id="IPR036554">
    <property type="entry name" value="GHMP_kinase_C_sf"/>
</dbReference>
<dbReference type="InterPro" id="IPR006204">
    <property type="entry name" value="GHMP_kinase_N_dom"/>
</dbReference>
<dbReference type="InterPro" id="IPR004424">
    <property type="entry name" value="IspE"/>
</dbReference>
<dbReference type="InterPro" id="IPR020568">
    <property type="entry name" value="Ribosomal_Su5_D2-typ_SF"/>
</dbReference>
<dbReference type="InterPro" id="IPR014721">
    <property type="entry name" value="Ribsml_uS5_D2-typ_fold_subgr"/>
</dbReference>
<dbReference type="NCBIfam" id="NF011202">
    <property type="entry name" value="PRK14608.1"/>
    <property type="match status" value="1"/>
</dbReference>
<dbReference type="PANTHER" id="PTHR43527">
    <property type="entry name" value="4-DIPHOSPHOCYTIDYL-2-C-METHYL-D-ERYTHRITOL KINASE, CHLOROPLASTIC"/>
    <property type="match status" value="1"/>
</dbReference>
<dbReference type="PANTHER" id="PTHR43527:SF2">
    <property type="entry name" value="4-DIPHOSPHOCYTIDYL-2-C-METHYL-D-ERYTHRITOL KINASE, CHLOROPLASTIC"/>
    <property type="match status" value="1"/>
</dbReference>
<dbReference type="Pfam" id="PF08544">
    <property type="entry name" value="GHMP_kinases_C"/>
    <property type="match status" value="1"/>
</dbReference>
<dbReference type="Pfam" id="PF00288">
    <property type="entry name" value="GHMP_kinases_N"/>
    <property type="match status" value="1"/>
</dbReference>
<dbReference type="PIRSF" id="PIRSF010376">
    <property type="entry name" value="IspE"/>
    <property type="match status" value="1"/>
</dbReference>
<dbReference type="SUPFAM" id="SSF55060">
    <property type="entry name" value="GHMP Kinase, C-terminal domain"/>
    <property type="match status" value="1"/>
</dbReference>
<dbReference type="SUPFAM" id="SSF54211">
    <property type="entry name" value="Ribosomal protein S5 domain 2-like"/>
    <property type="match status" value="1"/>
</dbReference>
<sequence length="293" mass="30578">MTVGSGHRWPEPSMHPTEIAYAKINLALHVRRRRADGYHDIETIFAFAEHGDIVAAEPGPARLMLAGPFAPALAGEDPEDNLVMRAADGLCALAGEAARPAIRLDKRLPVAAGIGGGSADAAAVLRLLGRAYGIAADDPRVMTLAATLGADVPACVRSATVRGGERGDRLESIAADGLHGLPLLLVNPRVALPTGPVFAAWDRVDRGPLAPGDPLAAALAGRNDLEAPATLLHPVIGEVVTLLAAQPGAILARMSGSGATCFALFGSEADRDAADRALAHRRPDWWRLTSRLR</sequence>
<accession>A5VDT3</accession>
<keyword id="KW-0067">ATP-binding</keyword>
<keyword id="KW-0414">Isoprene biosynthesis</keyword>
<keyword id="KW-0418">Kinase</keyword>
<keyword id="KW-0547">Nucleotide-binding</keyword>
<keyword id="KW-1185">Reference proteome</keyword>
<keyword id="KW-0808">Transferase</keyword>
<reference key="1">
    <citation type="journal article" date="2010" name="J. Bacteriol.">
        <title>Genome sequence of the dioxin-mineralizing bacterium Sphingomonas wittichii RW1.</title>
        <authorList>
            <person name="Miller T.R."/>
            <person name="Delcher A.L."/>
            <person name="Salzberg S.L."/>
            <person name="Saunders E."/>
            <person name="Detter J.C."/>
            <person name="Halden R.U."/>
        </authorList>
    </citation>
    <scope>NUCLEOTIDE SEQUENCE [LARGE SCALE GENOMIC DNA]</scope>
    <source>
        <strain>DSM 6014 / CCUG 31198 / JCM 15750 / NBRC 105917 / EY 4224 / RW1</strain>
    </source>
</reference>
<evidence type="ECO:0000255" key="1">
    <source>
        <dbReference type="HAMAP-Rule" id="MF_00061"/>
    </source>
</evidence>
<gene>
    <name evidence="1" type="primary">ispE</name>
    <name type="ordered locus">Swit_4106</name>
</gene>
<protein>
    <recommendedName>
        <fullName evidence="1">4-diphosphocytidyl-2-C-methyl-D-erythritol kinase</fullName>
        <shortName evidence="1">CMK</shortName>
        <ecNumber evidence="1">2.7.1.148</ecNumber>
    </recommendedName>
    <alternativeName>
        <fullName evidence="1">4-(cytidine-5'-diphospho)-2-C-methyl-D-erythritol kinase</fullName>
    </alternativeName>
</protein>
<proteinExistence type="inferred from homology"/>
<feature type="chain" id="PRO_0000335759" description="4-diphosphocytidyl-2-C-methyl-D-erythritol kinase">
    <location>
        <begin position="1"/>
        <end position="293"/>
    </location>
</feature>
<feature type="active site" evidence="1">
    <location>
        <position position="23"/>
    </location>
</feature>
<feature type="active site" evidence="1">
    <location>
        <position position="151"/>
    </location>
</feature>
<feature type="binding site" evidence="1">
    <location>
        <begin position="109"/>
        <end position="119"/>
    </location>
    <ligand>
        <name>ATP</name>
        <dbReference type="ChEBI" id="CHEBI:30616"/>
    </ligand>
</feature>
<organism>
    <name type="scientific">Rhizorhabdus wittichii (strain DSM 6014 / CCUG 31198 / JCM 15750 / NBRC 105917 / EY 4224 / RW1)</name>
    <name type="common">Sphingomonas wittichii</name>
    <dbReference type="NCBI Taxonomy" id="392499"/>
    <lineage>
        <taxon>Bacteria</taxon>
        <taxon>Pseudomonadati</taxon>
        <taxon>Pseudomonadota</taxon>
        <taxon>Alphaproteobacteria</taxon>
        <taxon>Sphingomonadales</taxon>
        <taxon>Sphingomonadaceae</taxon>
        <taxon>Rhizorhabdus</taxon>
    </lineage>
</organism>